<comment type="function">
    <text evidence="1">Catalyzes the NAD(P)H-dependent reduction of dihydroxyacetonephosphate (DHAP or glycerone phosphate) to glycerol 1-phosphate (G1P). The G1P thus generated is used as the glycerophosphate backbone of phospholipids in the cellular membranes of Archaea.</text>
</comment>
<comment type="catalytic activity">
    <reaction evidence="1">
        <text>sn-glycerol 1-phosphate + NAD(+) = dihydroxyacetone phosphate + NADH + H(+)</text>
        <dbReference type="Rhea" id="RHEA:21412"/>
        <dbReference type="ChEBI" id="CHEBI:15378"/>
        <dbReference type="ChEBI" id="CHEBI:57540"/>
        <dbReference type="ChEBI" id="CHEBI:57642"/>
        <dbReference type="ChEBI" id="CHEBI:57685"/>
        <dbReference type="ChEBI" id="CHEBI:57945"/>
        <dbReference type="EC" id="1.1.1.261"/>
    </reaction>
</comment>
<comment type="catalytic activity">
    <reaction evidence="1">
        <text>sn-glycerol 1-phosphate + NADP(+) = dihydroxyacetone phosphate + NADPH + H(+)</text>
        <dbReference type="Rhea" id="RHEA:21416"/>
        <dbReference type="ChEBI" id="CHEBI:15378"/>
        <dbReference type="ChEBI" id="CHEBI:57642"/>
        <dbReference type="ChEBI" id="CHEBI:57685"/>
        <dbReference type="ChEBI" id="CHEBI:57783"/>
        <dbReference type="ChEBI" id="CHEBI:58349"/>
        <dbReference type="EC" id="1.1.1.261"/>
    </reaction>
</comment>
<comment type="cofactor">
    <cofactor evidence="1">
        <name>Zn(2+)</name>
        <dbReference type="ChEBI" id="CHEBI:29105"/>
    </cofactor>
    <text evidence="1">Binds 1 zinc ion per subunit.</text>
</comment>
<comment type="pathway">
    <text evidence="1">Membrane lipid metabolism; glycerophospholipid metabolism.</text>
</comment>
<comment type="subcellular location">
    <subcellularLocation>
        <location evidence="1">Cytoplasm</location>
    </subcellularLocation>
</comment>
<comment type="similarity">
    <text evidence="1">Belongs to the glycerol-1-phosphate dehydrogenase family.</text>
</comment>
<comment type="sequence caution" evidence="2">
    <conflict type="erroneous initiation">
        <sequence resource="EMBL-CDS" id="BAB60393"/>
    </conflict>
</comment>
<protein>
    <recommendedName>
        <fullName evidence="1">Glycerol-1-phosphate dehydrogenase [NAD(P)+]</fullName>
        <shortName evidence="1">G1P dehydrogenase</shortName>
        <shortName evidence="1">G1PDH</shortName>
        <ecNumber evidence="1">1.1.1.261</ecNumber>
    </recommendedName>
    <alternativeName>
        <fullName evidence="1">Enantiomeric glycerophosphate synthase</fullName>
    </alternativeName>
    <alternativeName>
        <fullName evidence="1">sn-glycerol-1-phosphate dehydrogenase</fullName>
    </alternativeName>
</protein>
<proteinExistence type="inferred from homology"/>
<reference key="1">
    <citation type="journal article" date="2000" name="Proc. Natl. Acad. Sci. U.S.A.">
        <title>Archaeal adaptation to higher temperatures revealed by genomic sequence of Thermoplasma volcanium.</title>
        <authorList>
            <person name="Kawashima T."/>
            <person name="Amano N."/>
            <person name="Koike H."/>
            <person name="Makino S."/>
            <person name="Higuchi S."/>
            <person name="Kawashima-Ohya Y."/>
            <person name="Watanabe K."/>
            <person name="Yamazaki M."/>
            <person name="Kanehori K."/>
            <person name="Kawamoto T."/>
            <person name="Nunoshiba T."/>
            <person name="Yamamoto Y."/>
            <person name="Aramaki H."/>
            <person name="Makino K."/>
            <person name="Suzuki M."/>
        </authorList>
    </citation>
    <scope>NUCLEOTIDE SEQUENCE [LARGE SCALE GENOMIC DNA]</scope>
    <source>
        <strain>ATCC 51530 / DSM 4299 / JCM 9571 / NBRC 15438 / GSS1</strain>
    </source>
</reference>
<keyword id="KW-0963">Cytoplasm</keyword>
<keyword id="KW-0444">Lipid biosynthesis</keyword>
<keyword id="KW-0443">Lipid metabolism</keyword>
<keyword id="KW-0479">Metal-binding</keyword>
<keyword id="KW-0520">NAD</keyword>
<keyword id="KW-0521">NADP</keyword>
<keyword id="KW-0560">Oxidoreductase</keyword>
<keyword id="KW-0594">Phospholipid biosynthesis</keyword>
<keyword id="KW-1208">Phospholipid metabolism</keyword>
<keyword id="KW-0862">Zinc</keyword>
<gene>
    <name evidence="1" type="primary">egsA</name>
    <name type="ordered locus">TV1251</name>
    <name type="ORF">TVG1288826</name>
</gene>
<organism>
    <name type="scientific">Thermoplasma volcanium (strain ATCC 51530 / DSM 4299 / JCM 9571 / NBRC 15438 / GSS1)</name>
    <dbReference type="NCBI Taxonomy" id="273116"/>
    <lineage>
        <taxon>Archaea</taxon>
        <taxon>Methanobacteriati</taxon>
        <taxon>Thermoplasmatota</taxon>
        <taxon>Thermoplasmata</taxon>
        <taxon>Thermoplasmatales</taxon>
        <taxon>Thermoplasmataceae</taxon>
        <taxon>Thermoplasma</taxon>
    </lineage>
</organism>
<feature type="chain" id="PRO_0000157356" description="Glycerol-1-phosphate dehydrogenase [NAD(P)+]">
    <location>
        <begin position="1"/>
        <end position="352"/>
    </location>
</feature>
<feature type="binding site" evidence="1">
    <location>
        <begin position="99"/>
        <end position="103"/>
    </location>
    <ligand>
        <name>NAD(+)</name>
        <dbReference type="ChEBI" id="CHEBI:57540"/>
    </ligand>
</feature>
<feature type="binding site" evidence="1">
    <location>
        <begin position="121"/>
        <end position="124"/>
    </location>
    <ligand>
        <name>NAD(+)</name>
        <dbReference type="ChEBI" id="CHEBI:57540"/>
    </ligand>
</feature>
<feature type="binding site" evidence="1">
    <location>
        <position position="126"/>
    </location>
    <ligand>
        <name>substrate</name>
    </ligand>
</feature>
<feature type="binding site" evidence="1">
    <location>
        <position position="130"/>
    </location>
    <ligand>
        <name>NAD(+)</name>
        <dbReference type="ChEBI" id="CHEBI:57540"/>
    </ligand>
</feature>
<feature type="binding site" evidence="1">
    <location>
        <position position="173"/>
    </location>
    <ligand>
        <name>substrate</name>
    </ligand>
</feature>
<feature type="binding site" evidence="1">
    <location>
        <position position="173"/>
    </location>
    <ligand>
        <name>Zn(2+)</name>
        <dbReference type="ChEBI" id="CHEBI:29105"/>
        <note>catalytic</note>
    </ligand>
</feature>
<feature type="binding site" evidence="1">
    <location>
        <position position="253"/>
    </location>
    <ligand>
        <name>Zn(2+)</name>
        <dbReference type="ChEBI" id="CHEBI:29105"/>
        <note>catalytic</note>
    </ligand>
</feature>
<feature type="binding site" evidence="1">
    <location>
        <position position="257"/>
    </location>
    <ligand>
        <name>substrate</name>
    </ligand>
</feature>
<feature type="binding site" evidence="1">
    <location>
        <position position="269"/>
    </location>
    <ligand>
        <name>Zn(2+)</name>
        <dbReference type="ChEBI" id="CHEBI:29105"/>
        <note>catalytic</note>
    </ligand>
</feature>
<evidence type="ECO:0000255" key="1">
    <source>
        <dbReference type="HAMAP-Rule" id="MF_00497"/>
    </source>
</evidence>
<evidence type="ECO:0000305" key="2"/>
<sequence>MEFQKYRTMHFPRDVYIGHDVLNRVLDVVDQNSRTRDVIIVTGNTTYELAGKKIVEILASSPYEVHLSFAGEANYENLKKIEEETNDVNAGIIIGVGGGTKIDLAKKLAYDKNLPFISIPTSPSHDGIASPRASLRRNGISYSEEGAMPIGVIADTSVMIKAPYRYLAAGAADVISNISAVKDWKLAHRLRGEEFSSSAAAMSEYSAQEVISQVGEIRKYDESSVWLVTKNILASGTAMAIAGNSRPGSGSEHLFAHALEAAGVNNMLHGEMCAMGTIVSLYLHDDNWQKIRDVFESLGVSVKARDYGLKEEVVIEALRRAHAIRPERYTILGESDMSYDAAVKALELTGII</sequence>
<dbReference type="EC" id="1.1.1.261" evidence="1"/>
<dbReference type="EMBL" id="BA000011">
    <property type="protein sequence ID" value="BAB60393.1"/>
    <property type="status" value="ALT_INIT"/>
    <property type="molecule type" value="Genomic_DNA"/>
</dbReference>
<dbReference type="RefSeq" id="WP_010917485.1">
    <property type="nucleotide sequence ID" value="NC_002689.2"/>
</dbReference>
<dbReference type="SMR" id="Q979B1"/>
<dbReference type="STRING" id="273116.gene:9382056"/>
<dbReference type="PaxDb" id="273116-14325489"/>
<dbReference type="DNASU" id="1441367"/>
<dbReference type="GeneID" id="1441367"/>
<dbReference type="KEGG" id="tvo:TVG1288826"/>
<dbReference type="eggNOG" id="arCOG00982">
    <property type="taxonomic scope" value="Archaea"/>
</dbReference>
<dbReference type="HOGENOM" id="CLU_038362_0_0_2"/>
<dbReference type="OrthoDB" id="8656at2157"/>
<dbReference type="PhylomeDB" id="Q979B1"/>
<dbReference type="UniPathway" id="UPA00940"/>
<dbReference type="Proteomes" id="UP000001017">
    <property type="component" value="Chromosome"/>
</dbReference>
<dbReference type="GO" id="GO:0005737">
    <property type="term" value="C:cytoplasm"/>
    <property type="evidence" value="ECO:0007669"/>
    <property type="project" value="UniProtKB-SubCell"/>
</dbReference>
<dbReference type="GO" id="GO:0106357">
    <property type="term" value="F:glycerol-1-phosphate dehydrogenase (NAD+) activity"/>
    <property type="evidence" value="ECO:0007669"/>
    <property type="project" value="RHEA"/>
</dbReference>
<dbReference type="GO" id="GO:0106358">
    <property type="term" value="F:glycerol-1-phosphate dehydrogenase (NADP+) activity"/>
    <property type="evidence" value="ECO:0007669"/>
    <property type="project" value="RHEA"/>
</dbReference>
<dbReference type="GO" id="GO:0046872">
    <property type="term" value="F:metal ion binding"/>
    <property type="evidence" value="ECO:0007669"/>
    <property type="project" value="UniProtKB-KW"/>
</dbReference>
<dbReference type="GO" id="GO:0006650">
    <property type="term" value="P:glycerophospholipid metabolic process"/>
    <property type="evidence" value="ECO:0007669"/>
    <property type="project" value="UniProtKB-UniRule"/>
</dbReference>
<dbReference type="GO" id="GO:0008654">
    <property type="term" value="P:phospholipid biosynthetic process"/>
    <property type="evidence" value="ECO:0007669"/>
    <property type="project" value="UniProtKB-KW"/>
</dbReference>
<dbReference type="CDD" id="cd08173">
    <property type="entry name" value="Gro1PDH"/>
    <property type="match status" value="1"/>
</dbReference>
<dbReference type="Gene3D" id="3.40.50.1970">
    <property type="match status" value="1"/>
</dbReference>
<dbReference type="Gene3D" id="1.20.1090.10">
    <property type="entry name" value="Dehydroquinate synthase-like - alpha domain"/>
    <property type="match status" value="1"/>
</dbReference>
<dbReference type="HAMAP" id="MF_00497_A">
    <property type="entry name" value="G1P_dehydrogenase_A"/>
    <property type="match status" value="1"/>
</dbReference>
<dbReference type="InterPro" id="IPR023002">
    <property type="entry name" value="G1P_dehydrogenase_arc"/>
</dbReference>
<dbReference type="InterPro" id="IPR032837">
    <property type="entry name" value="G1PDH"/>
</dbReference>
<dbReference type="InterPro" id="IPR016205">
    <property type="entry name" value="Glycerol_DH"/>
</dbReference>
<dbReference type="NCBIfam" id="NF002022">
    <property type="entry name" value="PRK00843.1"/>
    <property type="match status" value="1"/>
</dbReference>
<dbReference type="PANTHER" id="PTHR43616">
    <property type="entry name" value="GLYCEROL DEHYDROGENASE"/>
    <property type="match status" value="1"/>
</dbReference>
<dbReference type="PANTHER" id="PTHR43616:SF5">
    <property type="entry name" value="GLYCEROL DEHYDROGENASE 1"/>
    <property type="match status" value="1"/>
</dbReference>
<dbReference type="Pfam" id="PF13685">
    <property type="entry name" value="Fe-ADH_2"/>
    <property type="match status" value="1"/>
</dbReference>
<dbReference type="PIRSF" id="PIRSF000112">
    <property type="entry name" value="Glycerol_dehydrogenase"/>
    <property type="match status" value="1"/>
</dbReference>
<dbReference type="SUPFAM" id="SSF56796">
    <property type="entry name" value="Dehydroquinate synthase-like"/>
    <property type="match status" value="1"/>
</dbReference>
<name>G1PDH_THEVO</name>
<accession>Q979B1</accession>